<organism>
    <name type="scientific">Rhodopirellula baltica (strain DSM 10527 / NCIMB 13988 / SH1)</name>
    <dbReference type="NCBI Taxonomy" id="243090"/>
    <lineage>
        <taxon>Bacteria</taxon>
        <taxon>Pseudomonadati</taxon>
        <taxon>Planctomycetota</taxon>
        <taxon>Planctomycetia</taxon>
        <taxon>Pirellulales</taxon>
        <taxon>Pirellulaceae</taxon>
        <taxon>Rhodopirellula</taxon>
    </lineage>
</organism>
<comment type="function">
    <text evidence="1">Catalyzes the condensation of ATP and 5-phosphoribose 1-diphosphate to form N'-(5'-phosphoribosyl)-ATP (PR-ATP). Has a crucial role in the pathway because the rate of histidine biosynthesis seems to be controlled primarily by regulation of HisG enzymatic activity.</text>
</comment>
<comment type="catalytic activity">
    <reaction evidence="1">
        <text>1-(5-phospho-beta-D-ribosyl)-ATP + diphosphate = 5-phospho-alpha-D-ribose 1-diphosphate + ATP</text>
        <dbReference type="Rhea" id="RHEA:18473"/>
        <dbReference type="ChEBI" id="CHEBI:30616"/>
        <dbReference type="ChEBI" id="CHEBI:33019"/>
        <dbReference type="ChEBI" id="CHEBI:58017"/>
        <dbReference type="ChEBI" id="CHEBI:73183"/>
        <dbReference type="EC" id="2.4.2.17"/>
    </reaction>
</comment>
<comment type="cofactor">
    <cofactor evidence="1">
        <name>Mg(2+)</name>
        <dbReference type="ChEBI" id="CHEBI:18420"/>
    </cofactor>
</comment>
<comment type="activity regulation">
    <text evidence="1">Feedback inhibited by histidine.</text>
</comment>
<comment type="pathway">
    <text evidence="1">Amino-acid biosynthesis; L-histidine biosynthesis; L-histidine from 5-phospho-alpha-D-ribose 1-diphosphate: step 1/9.</text>
</comment>
<comment type="subcellular location">
    <subcellularLocation>
        <location evidence="1">Cytoplasm</location>
    </subcellularLocation>
</comment>
<comment type="similarity">
    <text evidence="1">Belongs to the ATP phosphoribosyltransferase family. Long subfamily.</text>
</comment>
<proteinExistence type="inferred from homology"/>
<keyword id="KW-0028">Amino-acid biosynthesis</keyword>
<keyword id="KW-0067">ATP-binding</keyword>
<keyword id="KW-0963">Cytoplasm</keyword>
<keyword id="KW-0328">Glycosyltransferase</keyword>
<keyword id="KW-0368">Histidine biosynthesis</keyword>
<keyword id="KW-0460">Magnesium</keyword>
<keyword id="KW-0479">Metal-binding</keyword>
<keyword id="KW-0547">Nucleotide-binding</keyword>
<keyword id="KW-1185">Reference proteome</keyword>
<keyword id="KW-0808">Transferase</keyword>
<name>HIS1_RHOBA</name>
<gene>
    <name evidence="1" type="primary">hisG</name>
    <name type="ordered locus">RB5603</name>
</gene>
<protein>
    <recommendedName>
        <fullName evidence="1">ATP phosphoribosyltransferase</fullName>
        <shortName evidence="1">ATP-PRT</shortName>
        <shortName evidence="1">ATP-PRTase</shortName>
        <ecNumber evidence="1">2.4.2.17</ecNumber>
    </recommendedName>
</protein>
<dbReference type="EC" id="2.4.2.17" evidence="1"/>
<dbReference type="EMBL" id="BX294142">
    <property type="protein sequence ID" value="CAD74328.1"/>
    <property type="molecule type" value="Genomic_DNA"/>
</dbReference>
<dbReference type="RefSeq" id="NP_866788.1">
    <property type="nucleotide sequence ID" value="NC_005027.1"/>
</dbReference>
<dbReference type="SMR" id="Q7URL0"/>
<dbReference type="FunCoup" id="Q7URL0">
    <property type="interactions" value="455"/>
</dbReference>
<dbReference type="STRING" id="243090.RB5603"/>
<dbReference type="EnsemblBacteria" id="CAD74328">
    <property type="protein sequence ID" value="CAD74328"/>
    <property type="gene ID" value="RB5603"/>
</dbReference>
<dbReference type="KEGG" id="rba:RB5603"/>
<dbReference type="PATRIC" id="fig|243090.15.peg.2686"/>
<dbReference type="eggNOG" id="COG0040">
    <property type="taxonomic scope" value="Bacteria"/>
</dbReference>
<dbReference type="HOGENOM" id="CLU_038115_1_1_0"/>
<dbReference type="InParanoid" id="Q7URL0"/>
<dbReference type="OrthoDB" id="9801867at2"/>
<dbReference type="UniPathway" id="UPA00031">
    <property type="reaction ID" value="UER00006"/>
</dbReference>
<dbReference type="Proteomes" id="UP000001025">
    <property type="component" value="Chromosome"/>
</dbReference>
<dbReference type="GO" id="GO:0005737">
    <property type="term" value="C:cytoplasm"/>
    <property type="evidence" value="ECO:0007669"/>
    <property type="project" value="UniProtKB-SubCell"/>
</dbReference>
<dbReference type="GO" id="GO:0005524">
    <property type="term" value="F:ATP binding"/>
    <property type="evidence" value="ECO:0007669"/>
    <property type="project" value="UniProtKB-KW"/>
</dbReference>
<dbReference type="GO" id="GO:0003879">
    <property type="term" value="F:ATP phosphoribosyltransferase activity"/>
    <property type="evidence" value="ECO:0000318"/>
    <property type="project" value="GO_Central"/>
</dbReference>
<dbReference type="GO" id="GO:0000287">
    <property type="term" value="F:magnesium ion binding"/>
    <property type="evidence" value="ECO:0007669"/>
    <property type="project" value="UniProtKB-UniRule"/>
</dbReference>
<dbReference type="GO" id="GO:0000105">
    <property type="term" value="P:L-histidine biosynthetic process"/>
    <property type="evidence" value="ECO:0000318"/>
    <property type="project" value="GO_Central"/>
</dbReference>
<dbReference type="FunFam" id="3.40.190.10:FF:000008">
    <property type="entry name" value="ATP phosphoribosyltransferase"/>
    <property type="match status" value="1"/>
</dbReference>
<dbReference type="Gene3D" id="3.30.70.120">
    <property type="match status" value="1"/>
</dbReference>
<dbReference type="Gene3D" id="3.40.190.10">
    <property type="entry name" value="Periplasmic binding protein-like II"/>
    <property type="match status" value="2"/>
</dbReference>
<dbReference type="HAMAP" id="MF_00079">
    <property type="entry name" value="HisG_Long"/>
    <property type="match status" value="1"/>
</dbReference>
<dbReference type="InterPro" id="IPR020621">
    <property type="entry name" value="ATP-PRT_HisG_long"/>
</dbReference>
<dbReference type="InterPro" id="IPR013820">
    <property type="entry name" value="ATP_PRibTrfase_cat"/>
</dbReference>
<dbReference type="InterPro" id="IPR018198">
    <property type="entry name" value="ATP_PRibTrfase_CS"/>
</dbReference>
<dbReference type="InterPro" id="IPR001348">
    <property type="entry name" value="ATP_PRibTrfase_HisG"/>
</dbReference>
<dbReference type="InterPro" id="IPR013115">
    <property type="entry name" value="HisG_C"/>
</dbReference>
<dbReference type="InterPro" id="IPR011322">
    <property type="entry name" value="N-reg_PII-like_a/b"/>
</dbReference>
<dbReference type="InterPro" id="IPR015867">
    <property type="entry name" value="N-reg_PII/ATP_PRibTrfase_C"/>
</dbReference>
<dbReference type="NCBIfam" id="TIGR00070">
    <property type="entry name" value="hisG"/>
    <property type="match status" value="1"/>
</dbReference>
<dbReference type="NCBIfam" id="TIGR03455">
    <property type="entry name" value="HisG_C-term"/>
    <property type="match status" value="1"/>
</dbReference>
<dbReference type="PANTHER" id="PTHR21403:SF8">
    <property type="entry name" value="ATP PHOSPHORIBOSYLTRANSFERASE"/>
    <property type="match status" value="1"/>
</dbReference>
<dbReference type="PANTHER" id="PTHR21403">
    <property type="entry name" value="ATP PHOSPHORIBOSYLTRANSFERASE ATP-PRTASE"/>
    <property type="match status" value="1"/>
</dbReference>
<dbReference type="Pfam" id="PF01634">
    <property type="entry name" value="HisG"/>
    <property type="match status" value="1"/>
</dbReference>
<dbReference type="Pfam" id="PF08029">
    <property type="entry name" value="HisG_C"/>
    <property type="match status" value="1"/>
</dbReference>
<dbReference type="SUPFAM" id="SSF54913">
    <property type="entry name" value="GlnB-like"/>
    <property type="match status" value="1"/>
</dbReference>
<dbReference type="SUPFAM" id="SSF53850">
    <property type="entry name" value="Periplasmic binding protein-like II"/>
    <property type="match status" value="1"/>
</dbReference>
<dbReference type="PROSITE" id="PS01316">
    <property type="entry name" value="ATP_P_PHORIBOSYLTR"/>
    <property type="match status" value="1"/>
</dbReference>
<evidence type="ECO:0000255" key="1">
    <source>
        <dbReference type="HAMAP-Rule" id="MF_00079"/>
    </source>
</evidence>
<feature type="chain" id="PRO_0000151861" description="ATP phosphoribosyltransferase">
    <location>
        <begin position="1"/>
        <end position="299"/>
    </location>
</feature>
<reference key="1">
    <citation type="journal article" date="2003" name="Proc. Natl. Acad. Sci. U.S.A.">
        <title>Complete genome sequence of the marine planctomycete Pirellula sp. strain 1.</title>
        <authorList>
            <person name="Gloeckner F.O."/>
            <person name="Kube M."/>
            <person name="Bauer M."/>
            <person name="Teeling H."/>
            <person name="Lombardot T."/>
            <person name="Ludwig W."/>
            <person name="Gade D."/>
            <person name="Beck A."/>
            <person name="Borzym K."/>
            <person name="Heitmann K."/>
            <person name="Rabus R."/>
            <person name="Schlesner H."/>
            <person name="Amann R."/>
            <person name="Reinhardt R."/>
        </authorList>
    </citation>
    <scope>NUCLEOTIDE SEQUENCE [LARGE SCALE GENOMIC DNA]</scope>
    <source>
        <strain>DSM 10527 / NCIMB 13988 / SH1</strain>
    </source>
</reference>
<accession>Q7URL0</accession>
<sequence>MVPMTTLAPLGSGSDPDSFLRLGIPSKGRLSELATGLLNQAGLSFRRQNRGLFARVSGLPIDLIFLRTDDIPTLCAEGAIDMGITGSDLIEEAGANVEQRMAFGVGRCRLAFCVPDDEDYTDAAQLNGKRIATSFPHVTEQYLATKNAKAHLVSLSGSVEAMIRLGVADAIVDLVETGSTLAANRLRILEEIGHYETVLIQNGTHRCKEVADRLVSRLEGVVLARDYSLVEYNIPRSRVSEAEKITPGFNSPTINSLEDKDWCAVQVMVRRGEVVEVMERLKEIGASGIFEMTINNCRL</sequence>